<protein>
    <recommendedName>
        <fullName evidence="5">Cytochrome P450 81E8</fullName>
        <ecNumber evidence="6">1.14.13.-</ecNumber>
    </recommendedName>
</protein>
<name>C81E8_MEDTR</name>
<comment type="function">
    <text evidence="4">Probable monooxygenases exhibiting no activity with isoflavones such as formononetin, biochanin A, pseudobaptigenin, daidzein, genistein, isoformononetin and prunetin, or with flavonoids including naringenin, liquiritigenin, apigenin, luteolin, or kaempferol.</text>
</comment>
<comment type="cofactor">
    <cofactor evidence="1">
        <name>heme</name>
        <dbReference type="ChEBI" id="CHEBI:30413"/>
    </cofactor>
</comment>
<comment type="subcellular location">
    <subcellularLocation>
        <location evidence="2">Membrane</location>
        <topology evidence="2">Single-pass membrane protein</topology>
    </subcellularLocation>
</comment>
<comment type="similarity">
    <text evidence="3">Belongs to the cytochrome P450 family.</text>
</comment>
<gene>
    <name evidence="5" type="primary">CYP81E8</name>
</gene>
<dbReference type="EC" id="1.14.13.-" evidence="6"/>
<dbReference type="EMBL" id="AY278229">
    <property type="protein sequence ID" value="AAQ20042.1"/>
    <property type="molecule type" value="mRNA"/>
</dbReference>
<dbReference type="SMR" id="Q6WNQ8"/>
<dbReference type="PaxDb" id="3880-AES94616"/>
<dbReference type="eggNOG" id="KOG0156">
    <property type="taxonomic scope" value="Eukaryota"/>
</dbReference>
<dbReference type="ExpressionAtlas" id="Q6WNQ8">
    <property type="expression patterns" value="differential"/>
</dbReference>
<dbReference type="GO" id="GO:0016020">
    <property type="term" value="C:membrane"/>
    <property type="evidence" value="ECO:0007669"/>
    <property type="project" value="UniProtKB-SubCell"/>
</dbReference>
<dbReference type="GO" id="GO:0020037">
    <property type="term" value="F:heme binding"/>
    <property type="evidence" value="ECO:0007669"/>
    <property type="project" value="InterPro"/>
</dbReference>
<dbReference type="GO" id="GO:0005506">
    <property type="term" value="F:iron ion binding"/>
    <property type="evidence" value="ECO:0007669"/>
    <property type="project" value="InterPro"/>
</dbReference>
<dbReference type="GO" id="GO:0004497">
    <property type="term" value="F:monooxygenase activity"/>
    <property type="evidence" value="ECO:0007669"/>
    <property type="project" value="UniProtKB-KW"/>
</dbReference>
<dbReference type="GO" id="GO:0016705">
    <property type="term" value="F:oxidoreductase activity, acting on paired donors, with incorporation or reduction of molecular oxygen"/>
    <property type="evidence" value="ECO:0007669"/>
    <property type="project" value="InterPro"/>
</dbReference>
<dbReference type="CDD" id="cd20653">
    <property type="entry name" value="CYP81"/>
    <property type="match status" value="1"/>
</dbReference>
<dbReference type="FunFam" id="1.10.630.10:FF:000023">
    <property type="entry name" value="Cytochrome P450 family protein"/>
    <property type="match status" value="1"/>
</dbReference>
<dbReference type="Gene3D" id="1.10.630.10">
    <property type="entry name" value="Cytochrome P450"/>
    <property type="match status" value="1"/>
</dbReference>
<dbReference type="InterPro" id="IPR001128">
    <property type="entry name" value="Cyt_P450"/>
</dbReference>
<dbReference type="InterPro" id="IPR017972">
    <property type="entry name" value="Cyt_P450_CS"/>
</dbReference>
<dbReference type="InterPro" id="IPR002401">
    <property type="entry name" value="Cyt_P450_E_grp-I"/>
</dbReference>
<dbReference type="InterPro" id="IPR036396">
    <property type="entry name" value="Cyt_P450_sf"/>
</dbReference>
<dbReference type="InterPro" id="IPR050651">
    <property type="entry name" value="Plant_Cytochrome_P450_Monoox"/>
</dbReference>
<dbReference type="PANTHER" id="PTHR47947">
    <property type="entry name" value="CYTOCHROME P450 82C3-RELATED"/>
    <property type="match status" value="1"/>
</dbReference>
<dbReference type="PANTHER" id="PTHR47947:SF24">
    <property type="entry name" value="ISOFLAVONE 2'-HYDROXYLASE-LIKE"/>
    <property type="match status" value="1"/>
</dbReference>
<dbReference type="Pfam" id="PF00067">
    <property type="entry name" value="p450"/>
    <property type="match status" value="1"/>
</dbReference>
<dbReference type="PRINTS" id="PR00463">
    <property type="entry name" value="EP450I"/>
</dbReference>
<dbReference type="PRINTS" id="PR00385">
    <property type="entry name" value="P450"/>
</dbReference>
<dbReference type="SUPFAM" id="SSF48264">
    <property type="entry name" value="Cytochrome P450"/>
    <property type="match status" value="1"/>
</dbReference>
<dbReference type="PROSITE" id="PS00086">
    <property type="entry name" value="CYTOCHROME_P450"/>
    <property type="match status" value="1"/>
</dbReference>
<accession>Q6WNQ8</accession>
<reference key="1">
    <citation type="journal article" date="2003" name="Plant J.">
        <title>Regiospecific hydroxylation of isoflavones by cytochrome P450 81E enzymes from Medicago truncatula.</title>
        <authorList>
            <person name="Liu C.J."/>
            <person name="Huhman D."/>
            <person name="Sumner L.W."/>
            <person name="Dixon R.A."/>
        </authorList>
    </citation>
    <scope>NUCLEOTIDE SEQUENCE [MRNA]</scope>
    <scope>FUNCTION</scope>
</reference>
<proteinExistence type="evidence at transcript level"/>
<sequence length="499" mass="57301">MTTFYLSLIISLFFLIITLKVFFNTSRKFKNLPPGPQCLPIIGNLHQLKQPLHHTFHTLSQKYGQIFSLWFGSRLVVVVSSLTIAQECFTKNDIVLANRPHFLTGKYIGYNNTTVAQSPYGDHWRNLRRILSIEILSSHRLNSFLEIRRDEIMRLIQKLAQKSYNGFTEVELRPMFSEMTFNTIMRMVSGKRYYGNDCDVSDVEEARLFRGIIKEVVSLGGANNVGDFLGFLRWFDFDGLEKRLKKISKRTDAFLQGLIDEHRFGKRNSNTMIDHLLTQQQSQPEYYTDQIIKGLMVVMLLAGTDTSSVTIEWAMSNLLNHPEIMKKAKNELDTHIGHDRQVDEHDISKLPYLQSIVYETLRLHAAAPLLVPHLSSEDFSLGGYNIPQNTILMVNAWVIHRDPNLWSDPTCFKPERFEKEGEVNKLLSFGLGRRACPGENLSQRTEGLTLGLLIQCFEWKRIGEEKIDMVEAKGITAGKKTSLNAMCKVRHPLKINDVF</sequence>
<keyword id="KW-0349">Heme</keyword>
<keyword id="KW-0408">Iron</keyword>
<keyword id="KW-0472">Membrane</keyword>
<keyword id="KW-0479">Metal-binding</keyword>
<keyword id="KW-0503">Monooxygenase</keyword>
<keyword id="KW-0521">NADP</keyword>
<keyword id="KW-0560">Oxidoreductase</keyword>
<keyword id="KW-0812">Transmembrane</keyword>
<keyword id="KW-1133">Transmembrane helix</keyword>
<organism evidence="7">
    <name type="scientific">Medicago truncatula</name>
    <name type="common">Barrel medic</name>
    <name type="synonym">Medicago tribuloides</name>
    <dbReference type="NCBI Taxonomy" id="3880"/>
    <lineage>
        <taxon>Eukaryota</taxon>
        <taxon>Viridiplantae</taxon>
        <taxon>Streptophyta</taxon>
        <taxon>Embryophyta</taxon>
        <taxon>Tracheophyta</taxon>
        <taxon>Spermatophyta</taxon>
        <taxon>Magnoliopsida</taxon>
        <taxon>eudicotyledons</taxon>
        <taxon>Gunneridae</taxon>
        <taxon>Pentapetalae</taxon>
        <taxon>rosids</taxon>
        <taxon>fabids</taxon>
        <taxon>Fabales</taxon>
        <taxon>Fabaceae</taxon>
        <taxon>Papilionoideae</taxon>
        <taxon>50 kb inversion clade</taxon>
        <taxon>NPAAA clade</taxon>
        <taxon>Hologalegina</taxon>
        <taxon>IRL clade</taxon>
        <taxon>Trifolieae</taxon>
        <taxon>Medicago</taxon>
    </lineage>
</organism>
<feature type="chain" id="PRO_0000430743" description="Cytochrome P450 81E8">
    <location>
        <begin position="1"/>
        <end position="499"/>
    </location>
</feature>
<feature type="transmembrane region" description="Helical" evidence="2">
    <location>
        <begin position="3"/>
        <end position="23"/>
    </location>
</feature>
<feature type="binding site" description="axial binding residue" evidence="1">
    <location>
        <position position="436"/>
    </location>
    <ligand>
        <name>heme</name>
        <dbReference type="ChEBI" id="CHEBI:30413"/>
    </ligand>
    <ligandPart>
        <name>Fe</name>
        <dbReference type="ChEBI" id="CHEBI:18248"/>
    </ligandPart>
</feature>
<evidence type="ECO:0000250" key="1">
    <source>
        <dbReference type="UniProtKB" id="P04798"/>
    </source>
</evidence>
<evidence type="ECO:0000255" key="2"/>
<evidence type="ECO:0000255" key="3">
    <source>
        <dbReference type="RuleBase" id="RU000461"/>
    </source>
</evidence>
<evidence type="ECO:0000269" key="4">
    <source>
    </source>
</evidence>
<evidence type="ECO:0000303" key="5">
    <source>
    </source>
</evidence>
<evidence type="ECO:0000305" key="6"/>
<evidence type="ECO:0000312" key="7">
    <source>
        <dbReference type="EMBL" id="AAQ20042.1"/>
    </source>
</evidence>